<feature type="transit peptide" description="Mitochondrion" evidence="1">
    <location>
        <begin position="1"/>
        <end position="39"/>
    </location>
</feature>
<feature type="chain" id="PRO_0000002414" description="Succinyl-CoA:3-ketoacid coenzyme A transferase 1, mitochondrial">
    <location>
        <begin position="40"/>
        <end position="520"/>
    </location>
</feature>
<feature type="active site" description="5-glutamyl coenzyme A thioester intermediate" evidence="5">
    <location>
        <position position="344"/>
    </location>
</feature>
<feature type="modified residue" description="Phosphoserine" evidence="3">
    <location>
        <position position="170"/>
    </location>
</feature>
<feature type="modified residue" description="N6-succinyllysine" evidence="7">
    <location>
        <position position="185"/>
    </location>
</feature>
<feature type="modified residue" description="N6-succinyllysine" evidence="7">
    <location>
        <position position="418"/>
    </location>
</feature>
<feature type="modified residue" description="N6-succinyllysine" evidence="7">
    <location>
        <position position="421"/>
    </location>
</feature>
<feature type="modified residue" description="N6-succinyllysine" evidence="7">
    <location>
        <position position="455"/>
    </location>
</feature>
<feature type="sequence conflict" description="In Ref. 2; BAB27562." evidence="6" ref="2">
    <original>V</original>
    <variation>G</variation>
    <location>
        <position position="478"/>
    </location>
</feature>
<sequence length="520" mass="55989">MAALKLLSSGLRLGASARSSRGALHKGCVCYFSVSTRHHTKFYTDPVEAVKDIPNGATLLVGGFGLCGIPENLIGALLKTGVKDLTAVSNNAGVDNFGLGLLLRSKQIKRMISSYVGENAEFERQFLSGELEVELTPQGTLAERIRAGGAGVPAFYTSTGYGTLVQEGGSPIKYNKDGSVAIASKPREVREFNGQHFILEEAITGDFALVKAWKADRAGNVIFRKSARNFNLPMCKAAGTTVVEVEEIVDIGSFAPEDIHIPKIYVHRLIKGEKYEKRIERLSLRKEGDGKGKSGKPGGDVRERIIKRAALEFEDGMYANLGIGIPLLASNFISPNMTVHLQSENGVLGLGPYPLKDEADADLINAGKETVTVLPGASFFSSDESFAMIRGGHVNLTMLGAMQVSKYGDLANWMIPGKMVKGMGGAMDLVSSSKTKVVVTMEHSAKGNAHKIMEKCTLPLTGKQCVNRIITEKGVFDVDKKNGLTLIELWEGLTVDDIKKSTGCDFAVSPNLMPMQQIST</sequence>
<gene>
    <name type="primary">Oxct1</name>
    <name type="synonym">Oxct</name>
    <name type="synonym">Scot</name>
</gene>
<comment type="function">
    <text evidence="3 4">Key enzyme for ketone body catabolism. Catalyzes the first, rate-limiting step of ketone body utilization in extrahepatic tissues, by transferring coenzyme A (CoA) from a donor thiolester species (succinyl-CoA) to an acceptor carboxylate (acetoacetate), and produces acetoacetyl-CoA. Acetoacetyl-CoA is further metabolized by acetoacetyl-CoA thiolase into two acetyl-CoA molecules which enter the citric acid cycle for energy production (By similarity). Forms a dimeric enzyme where both of the subunits are able to form enzyme-CoA thiolester intermediates, but only one subunit is competent to transfer the CoA moiety to the acceptor (3-oxo acid) carboxylate and produce a new acyl-CoA. Formation of the enzyme-CoA intermediate proceeds via an unstable anhydride species formed between the carboxylate groups of the enzyme and substrate (By similarity).</text>
</comment>
<comment type="catalytic activity">
    <reaction evidence="3">
        <text>a 3-oxo acid + succinyl-CoA = a 3-oxoacyl-CoA + succinate</text>
        <dbReference type="Rhea" id="RHEA:24564"/>
        <dbReference type="ChEBI" id="CHEBI:30031"/>
        <dbReference type="ChEBI" id="CHEBI:35973"/>
        <dbReference type="ChEBI" id="CHEBI:57292"/>
        <dbReference type="ChEBI" id="CHEBI:90726"/>
        <dbReference type="EC" id="2.8.3.5"/>
    </reaction>
    <physiologicalReaction direction="left-to-right" evidence="3">
        <dbReference type="Rhea" id="RHEA:24565"/>
    </physiologicalReaction>
</comment>
<comment type="catalytic activity">
    <reaction evidence="3">
        <text>acetoacetate + succinyl-CoA = acetoacetyl-CoA + succinate</text>
        <dbReference type="Rhea" id="RHEA:25480"/>
        <dbReference type="ChEBI" id="CHEBI:13705"/>
        <dbReference type="ChEBI" id="CHEBI:30031"/>
        <dbReference type="ChEBI" id="CHEBI:57286"/>
        <dbReference type="ChEBI" id="CHEBI:57292"/>
        <dbReference type="EC" id="2.8.3.5"/>
    </reaction>
    <physiologicalReaction direction="left-to-right" evidence="3">
        <dbReference type="Rhea" id="RHEA:25481"/>
    </physiologicalReaction>
</comment>
<comment type="pathway">
    <text evidence="3">Ketone metabolism; succinyl-CoA degradation; acetoacetyl-CoA from succinyl-CoA: step 1/1.</text>
</comment>
<comment type="subunit">
    <text evidence="4">Homodimer. Only one subunit is competent to transfer the CoA moiety to the acceptor carboxylate (3-oxo acid).</text>
</comment>
<comment type="subcellular location">
    <subcellularLocation>
        <location evidence="2">Mitochondrion</location>
    </subcellularLocation>
</comment>
<comment type="similarity">
    <text evidence="6">Belongs to the 3-oxoacid CoA-transferase family.</text>
</comment>
<protein>
    <recommendedName>
        <fullName>Succinyl-CoA:3-ketoacid coenzyme A transferase 1, mitochondrial</fullName>
        <shortName>SCOT</shortName>
        <ecNumber evidence="4">2.8.3.5</ecNumber>
    </recommendedName>
    <alternativeName>
        <fullName>3-oxoacid CoA-transferase 1</fullName>
    </alternativeName>
    <alternativeName>
        <fullName>Somatic-type succinyl-CoA:3-oxoacid CoA-transferase</fullName>
        <shortName>SCOT-s</shortName>
    </alternativeName>
    <alternativeName>
        <fullName>Succinyl-CoA:3-oxoacid CoA transferase</fullName>
    </alternativeName>
</protein>
<name>SCOT1_MOUSE</name>
<proteinExistence type="evidence at protein level"/>
<keyword id="KW-0903">Direct protein sequencing</keyword>
<keyword id="KW-0443">Lipid metabolism</keyword>
<keyword id="KW-0496">Mitochondrion</keyword>
<keyword id="KW-0597">Phosphoprotein</keyword>
<keyword id="KW-1185">Reference proteome</keyword>
<keyword id="KW-0808">Transferase</keyword>
<keyword id="KW-0809">Transit peptide</keyword>
<organism>
    <name type="scientific">Mus musculus</name>
    <name type="common">Mouse</name>
    <dbReference type="NCBI Taxonomy" id="10090"/>
    <lineage>
        <taxon>Eukaryota</taxon>
        <taxon>Metazoa</taxon>
        <taxon>Chordata</taxon>
        <taxon>Craniata</taxon>
        <taxon>Vertebrata</taxon>
        <taxon>Euteleostomi</taxon>
        <taxon>Mammalia</taxon>
        <taxon>Eutheria</taxon>
        <taxon>Euarchontoglires</taxon>
        <taxon>Glires</taxon>
        <taxon>Rodentia</taxon>
        <taxon>Myomorpha</taxon>
        <taxon>Muroidea</taxon>
        <taxon>Muridae</taxon>
        <taxon>Murinae</taxon>
        <taxon>Mus</taxon>
        <taxon>Mus</taxon>
    </lineage>
</organism>
<reference key="1">
    <citation type="journal article" date="2003" name="Int. J. Androl.">
        <title>Differential expression of succinyl CoA transferase (SCOT) genes in somatic and germline cells of the mouse testis.</title>
        <authorList>
            <person name="Tanaka H."/>
            <person name="Iguchi N."/>
            <person name="Miyagawa Y."/>
            <person name="Koga M."/>
            <person name="Kohroki J."/>
            <person name="Nishimune Y."/>
        </authorList>
    </citation>
    <scope>NUCLEOTIDE SEQUENCE [MRNA]</scope>
</reference>
<reference key="2">
    <citation type="journal article" date="2005" name="Science">
        <title>The transcriptional landscape of the mammalian genome.</title>
        <authorList>
            <person name="Carninci P."/>
            <person name="Kasukawa T."/>
            <person name="Katayama S."/>
            <person name="Gough J."/>
            <person name="Frith M.C."/>
            <person name="Maeda N."/>
            <person name="Oyama R."/>
            <person name="Ravasi T."/>
            <person name="Lenhard B."/>
            <person name="Wells C."/>
            <person name="Kodzius R."/>
            <person name="Shimokawa K."/>
            <person name="Bajic V.B."/>
            <person name="Brenner S.E."/>
            <person name="Batalov S."/>
            <person name="Forrest A.R."/>
            <person name="Zavolan M."/>
            <person name="Davis M.J."/>
            <person name="Wilming L.G."/>
            <person name="Aidinis V."/>
            <person name="Allen J.E."/>
            <person name="Ambesi-Impiombato A."/>
            <person name="Apweiler R."/>
            <person name="Aturaliya R.N."/>
            <person name="Bailey T.L."/>
            <person name="Bansal M."/>
            <person name="Baxter L."/>
            <person name="Beisel K.W."/>
            <person name="Bersano T."/>
            <person name="Bono H."/>
            <person name="Chalk A.M."/>
            <person name="Chiu K.P."/>
            <person name="Choudhary V."/>
            <person name="Christoffels A."/>
            <person name="Clutterbuck D.R."/>
            <person name="Crowe M.L."/>
            <person name="Dalla E."/>
            <person name="Dalrymple B.P."/>
            <person name="de Bono B."/>
            <person name="Della Gatta G."/>
            <person name="di Bernardo D."/>
            <person name="Down T."/>
            <person name="Engstrom P."/>
            <person name="Fagiolini M."/>
            <person name="Faulkner G."/>
            <person name="Fletcher C.F."/>
            <person name="Fukushima T."/>
            <person name="Furuno M."/>
            <person name="Futaki S."/>
            <person name="Gariboldi M."/>
            <person name="Georgii-Hemming P."/>
            <person name="Gingeras T.R."/>
            <person name="Gojobori T."/>
            <person name="Green R.E."/>
            <person name="Gustincich S."/>
            <person name="Harbers M."/>
            <person name="Hayashi Y."/>
            <person name="Hensch T.K."/>
            <person name="Hirokawa N."/>
            <person name="Hill D."/>
            <person name="Huminiecki L."/>
            <person name="Iacono M."/>
            <person name="Ikeo K."/>
            <person name="Iwama A."/>
            <person name="Ishikawa T."/>
            <person name="Jakt M."/>
            <person name="Kanapin A."/>
            <person name="Katoh M."/>
            <person name="Kawasawa Y."/>
            <person name="Kelso J."/>
            <person name="Kitamura H."/>
            <person name="Kitano H."/>
            <person name="Kollias G."/>
            <person name="Krishnan S.P."/>
            <person name="Kruger A."/>
            <person name="Kummerfeld S.K."/>
            <person name="Kurochkin I.V."/>
            <person name="Lareau L.F."/>
            <person name="Lazarevic D."/>
            <person name="Lipovich L."/>
            <person name="Liu J."/>
            <person name="Liuni S."/>
            <person name="McWilliam S."/>
            <person name="Madan Babu M."/>
            <person name="Madera M."/>
            <person name="Marchionni L."/>
            <person name="Matsuda H."/>
            <person name="Matsuzawa S."/>
            <person name="Miki H."/>
            <person name="Mignone F."/>
            <person name="Miyake S."/>
            <person name="Morris K."/>
            <person name="Mottagui-Tabar S."/>
            <person name="Mulder N."/>
            <person name="Nakano N."/>
            <person name="Nakauchi H."/>
            <person name="Ng P."/>
            <person name="Nilsson R."/>
            <person name="Nishiguchi S."/>
            <person name="Nishikawa S."/>
            <person name="Nori F."/>
            <person name="Ohara O."/>
            <person name="Okazaki Y."/>
            <person name="Orlando V."/>
            <person name="Pang K.C."/>
            <person name="Pavan W.J."/>
            <person name="Pavesi G."/>
            <person name="Pesole G."/>
            <person name="Petrovsky N."/>
            <person name="Piazza S."/>
            <person name="Reed J."/>
            <person name="Reid J.F."/>
            <person name="Ring B.Z."/>
            <person name="Ringwald M."/>
            <person name="Rost B."/>
            <person name="Ruan Y."/>
            <person name="Salzberg S.L."/>
            <person name="Sandelin A."/>
            <person name="Schneider C."/>
            <person name="Schoenbach C."/>
            <person name="Sekiguchi K."/>
            <person name="Semple C.A."/>
            <person name="Seno S."/>
            <person name="Sessa L."/>
            <person name="Sheng Y."/>
            <person name="Shibata Y."/>
            <person name="Shimada H."/>
            <person name="Shimada K."/>
            <person name="Silva D."/>
            <person name="Sinclair B."/>
            <person name="Sperling S."/>
            <person name="Stupka E."/>
            <person name="Sugiura K."/>
            <person name="Sultana R."/>
            <person name="Takenaka Y."/>
            <person name="Taki K."/>
            <person name="Tammoja K."/>
            <person name="Tan S.L."/>
            <person name="Tang S."/>
            <person name="Taylor M.S."/>
            <person name="Tegner J."/>
            <person name="Teichmann S.A."/>
            <person name="Ueda H.R."/>
            <person name="van Nimwegen E."/>
            <person name="Verardo R."/>
            <person name="Wei C.L."/>
            <person name="Yagi K."/>
            <person name="Yamanishi H."/>
            <person name="Zabarovsky E."/>
            <person name="Zhu S."/>
            <person name="Zimmer A."/>
            <person name="Hide W."/>
            <person name="Bult C."/>
            <person name="Grimmond S.M."/>
            <person name="Teasdale R.D."/>
            <person name="Liu E.T."/>
            <person name="Brusic V."/>
            <person name="Quackenbush J."/>
            <person name="Wahlestedt C."/>
            <person name="Mattick J.S."/>
            <person name="Hume D.A."/>
            <person name="Kai C."/>
            <person name="Sasaki D."/>
            <person name="Tomaru Y."/>
            <person name="Fukuda S."/>
            <person name="Kanamori-Katayama M."/>
            <person name="Suzuki M."/>
            <person name="Aoki J."/>
            <person name="Arakawa T."/>
            <person name="Iida J."/>
            <person name="Imamura K."/>
            <person name="Itoh M."/>
            <person name="Kato T."/>
            <person name="Kawaji H."/>
            <person name="Kawagashira N."/>
            <person name="Kawashima T."/>
            <person name="Kojima M."/>
            <person name="Kondo S."/>
            <person name="Konno H."/>
            <person name="Nakano K."/>
            <person name="Ninomiya N."/>
            <person name="Nishio T."/>
            <person name="Okada M."/>
            <person name="Plessy C."/>
            <person name="Shibata K."/>
            <person name="Shiraki T."/>
            <person name="Suzuki S."/>
            <person name="Tagami M."/>
            <person name="Waki K."/>
            <person name="Watahiki A."/>
            <person name="Okamura-Oho Y."/>
            <person name="Suzuki H."/>
            <person name="Kawai J."/>
            <person name="Hayashizaki Y."/>
        </authorList>
    </citation>
    <scope>NUCLEOTIDE SEQUENCE [LARGE SCALE MRNA]</scope>
    <source>
        <strain>C57BL/6J</strain>
        <tissue>Bone marrow</tissue>
        <tissue>Embryo</tissue>
        <tissue>Tongue</tissue>
    </source>
</reference>
<reference key="3">
    <citation type="journal article" date="2004" name="Genome Res.">
        <title>The status, quality, and expansion of the NIH full-length cDNA project: the Mammalian Gene Collection (MGC).</title>
        <authorList>
            <consortium name="The MGC Project Team"/>
        </authorList>
    </citation>
    <scope>NUCLEOTIDE SEQUENCE [LARGE SCALE MRNA]</scope>
</reference>
<reference key="4">
    <citation type="submission" date="2007-07" db="UniProtKB">
        <authorList>
            <person name="Lubec G."/>
            <person name="Kang S.U."/>
            <person name="Klug S."/>
            <person name="Yang J.W."/>
            <person name="Zigmond M."/>
        </authorList>
    </citation>
    <scope>PROTEIN SEQUENCE OF 42-51; 84-104; 147-173; 191-211 AND 437-455</scope>
    <scope>IDENTIFICATION BY MASS SPECTROMETRY</scope>
    <source>
        <strain>C57BL/6J</strain>
        <tissue>Brain</tissue>
        <tissue>Hippocampus</tissue>
    </source>
</reference>
<reference key="5">
    <citation type="journal article" date="2010" name="Cell">
        <title>A tissue-specific atlas of mouse protein phosphorylation and expression.</title>
        <authorList>
            <person name="Huttlin E.L."/>
            <person name="Jedrychowski M.P."/>
            <person name="Elias J.E."/>
            <person name="Goswami T."/>
            <person name="Rad R."/>
            <person name="Beausoleil S.A."/>
            <person name="Villen J."/>
            <person name="Haas W."/>
            <person name="Sowa M.E."/>
            <person name="Gygi S.P."/>
        </authorList>
    </citation>
    <scope>IDENTIFICATION BY MASS SPECTROMETRY [LARGE SCALE ANALYSIS]</scope>
    <source>
        <tissue>Brain</tissue>
        <tissue>Brown adipose tissue</tissue>
        <tissue>Heart</tissue>
        <tissue>Kidney</tissue>
        <tissue>Liver</tissue>
        <tissue>Lung</tissue>
        <tissue>Pancreas</tissue>
        <tissue>Spleen</tissue>
        <tissue>Testis</tissue>
    </source>
</reference>
<reference key="6">
    <citation type="journal article" date="2013" name="Mol. Cell">
        <title>SIRT5-mediated lysine desuccinylation impacts diverse metabolic pathways.</title>
        <authorList>
            <person name="Park J."/>
            <person name="Chen Y."/>
            <person name="Tishkoff D.X."/>
            <person name="Peng C."/>
            <person name="Tan M."/>
            <person name="Dai L."/>
            <person name="Xie Z."/>
            <person name="Zhang Y."/>
            <person name="Zwaans B.M."/>
            <person name="Skinner M.E."/>
            <person name="Lombard D.B."/>
            <person name="Zhao Y."/>
        </authorList>
    </citation>
    <scope>SUCCINYLATION [LARGE SCALE ANALYSIS] AT LYS-185; LYS-418; LYS-421 AND LYS-455</scope>
    <scope>IDENTIFICATION BY MASS SPECTROMETRY [LARGE SCALE ANALYSIS]</scope>
    <source>
        <tissue>Embryonic fibroblast</tissue>
    </source>
</reference>
<evidence type="ECO:0000250" key="1"/>
<evidence type="ECO:0000250" key="2">
    <source>
        <dbReference type="UniProtKB" id="B2GV06"/>
    </source>
</evidence>
<evidence type="ECO:0000250" key="3">
    <source>
        <dbReference type="UniProtKB" id="P55809"/>
    </source>
</evidence>
<evidence type="ECO:0000250" key="4">
    <source>
        <dbReference type="UniProtKB" id="Q29551"/>
    </source>
</evidence>
<evidence type="ECO:0000255" key="5">
    <source>
        <dbReference type="PROSITE-ProRule" id="PRU10034"/>
    </source>
</evidence>
<evidence type="ECO:0000305" key="6"/>
<evidence type="ECO:0007744" key="7">
    <source>
    </source>
</evidence>
<dbReference type="EC" id="2.8.3.5" evidence="4"/>
<dbReference type="EMBL" id="AB085609">
    <property type="protein sequence ID" value="BAC05524.1"/>
    <property type="molecule type" value="mRNA"/>
</dbReference>
<dbReference type="EMBL" id="AK009027">
    <property type="protein sequence ID" value="BAB26035.1"/>
    <property type="molecule type" value="mRNA"/>
</dbReference>
<dbReference type="EMBL" id="AK011354">
    <property type="protein sequence ID" value="BAB27562.1"/>
    <property type="molecule type" value="mRNA"/>
</dbReference>
<dbReference type="EMBL" id="AK151662">
    <property type="protein sequence ID" value="BAE30590.1"/>
    <property type="molecule type" value="mRNA"/>
</dbReference>
<dbReference type="EMBL" id="AK167681">
    <property type="protein sequence ID" value="BAE39730.1"/>
    <property type="molecule type" value="mRNA"/>
</dbReference>
<dbReference type="EMBL" id="BC003422">
    <property type="protein sequence ID" value="AAH03422.1"/>
    <property type="molecule type" value="mRNA"/>
</dbReference>
<dbReference type="CCDS" id="CCDS27361.1"/>
<dbReference type="PIR" id="PD0443">
    <property type="entry name" value="PD0443"/>
</dbReference>
<dbReference type="RefSeq" id="NP_077150.1">
    <property type="nucleotide sequence ID" value="NM_024188.6"/>
</dbReference>
<dbReference type="SMR" id="Q9D0K2"/>
<dbReference type="BioGRID" id="211895">
    <property type="interactions" value="18"/>
</dbReference>
<dbReference type="FunCoup" id="Q9D0K2">
    <property type="interactions" value="1994"/>
</dbReference>
<dbReference type="IntAct" id="Q9D0K2">
    <property type="interactions" value="6"/>
</dbReference>
<dbReference type="MINT" id="Q9D0K2"/>
<dbReference type="STRING" id="10090.ENSMUSP00000106318"/>
<dbReference type="GlyGen" id="Q9D0K2">
    <property type="glycosylation" value="1 site, 1 O-linked glycan (1 site)"/>
</dbReference>
<dbReference type="iPTMnet" id="Q9D0K2"/>
<dbReference type="MetOSite" id="Q9D0K2"/>
<dbReference type="PhosphoSitePlus" id="Q9D0K2"/>
<dbReference type="SwissPalm" id="Q9D0K2"/>
<dbReference type="REPRODUCTION-2DPAGE" id="IPI00132653"/>
<dbReference type="jPOST" id="Q9D0K2"/>
<dbReference type="PaxDb" id="10090-ENSMUSP00000106318"/>
<dbReference type="PeptideAtlas" id="Q9D0K2"/>
<dbReference type="ProteomicsDB" id="256713"/>
<dbReference type="Pumba" id="Q9D0K2"/>
<dbReference type="Antibodypedia" id="1558">
    <property type="antibodies" value="186 antibodies from 27 providers"/>
</dbReference>
<dbReference type="DNASU" id="67041"/>
<dbReference type="Ensembl" id="ENSMUST00000110690.9">
    <property type="protein sequence ID" value="ENSMUSP00000106318.3"/>
    <property type="gene ID" value="ENSMUSG00000022186.15"/>
</dbReference>
<dbReference type="GeneID" id="67041"/>
<dbReference type="KEGG" id="mmu:67041"/>
<dbReference type="UCSC" id="uc007vck.2">
    <property type="organism name" value="mouse"/>
</dbReference>
<dbReference type="AGR" id="MGI:1914291"/>
<dbReference type="CTD" id="5019"/>
<dbReference type="MGI" id="MGI:1914291">
    <property type="gene designation" value="Oxct1"/>
</dbReference>
<dbReference type="VEuPathDB" id="HostDB:ENSMUSG00000022186"/>
<dbReference type="eggNOG" id="KOG3822">
    <property type="taxonomic scope" value="Eukaryota"/>
</dbReference>
<dbReference type="GeneTree" id="ENSGT00390000009130"/>
<dbReference type="InParanoid" id="Q9D0K2"/>
<dbReference type="OMA" id="LGNCWFR"/>
<dbReference type="OrthoDB" id="1933379at2759"/>
<dbReference type="PhylomeDB" id="Q9D0K2"/>
<dbReference type="TreeFam" id="TF313991"/>
<dbReference type="BRENDA" id="2.8.3.5">
    <property type="organism ID" value="3474"/>
</dbReference>
<dbReference type="Reactome" id="R-MMU-77108">
    <property type="pathway name" value="Utilization of Ketone Bodies"/>
</dbReference>
<dbReference type="Reactome" id="R-MMU-9837999">
    <property type="pathway name" value="Mitochondrial protein degradation"/>
</dbReference>
<dbReference type="UniPathway" id="UPA00929">
    <property type="reaction ID" value="UER00894"/>
</dbReference>
<dbReference type="BioGRID-ORCS" id="67041">
    <property type="hits" value="4 hits in 81 CRISPR screens"/>
</dbReference>
<dbReference type="ChiTaRS" id="Oxct1">
    <property type="organism name" value="mouse"/>
</dbReference>
<dbReference type="PRO" id="PR:Q9D0K2"/>
<dbReference type="Proteomes" id="UP000000589">
    <property type="component" value="Chromosome 15"/>
</dbReference>
<dbReference type="RNAct" id="Q9D0K2">
    <property type="molecule type" value="protein"/>
</dbReference>
<dbReference type="Bgee" id="ENSMUSG00000022186">
    <property type="expression patterns" value="Expressed in adult mammalian kidney and 257 other cell types or tissues"/>
</dbReference>
<dbReference type="ExpressionAtlas" id="Q9D0K2">
    <property type="expression patterns" value="baseline and differential"/>
</dbReference>
<dbReference type="GO" id="GO:0005739">
    <property type="term" value="C:mitochondrion"/>
    <property type="evidence" value="ECO:0007005"/>
    <property type="project" value="MGI"/>
</dbReference>
<dbReference type="GO" id="GO:0042802">
    <property type="term" value="F:identical protein binding"/>
    <property type="evidence" value="ECO:0007669"/>
    <property type="project" value="Ensembl"/>
</dbReference>
<dbReference type="GO" id="GO:0008260">
    <property type="term" value="F:succinyl-CoA:3-oxo-acid CoA-transferase activity"/>
    <property type="evidence" value="ECO:0000314"/>
    <property type="project" value="MGI"/>
</dbReference>
<dbReference type="GO" id="GO:0060612">
    <property type="term" value="P:adipose tissue development"/>
    <property type="evidence" value="ECO:0007669"/>
    <property type="project" value="Ensembl"/>
</dbReference>
<dbReference type="GO" id="GO:0007507">
    <property type="term" value="P:heart development"/>
    <property type="evidence" value="ECO:0007669"/>
    <property type="project" value="Ensembl"/>
</dbReference>
<dbReference type="GO" id="GO:0046952">
    <property type="term" value="P:ketone body catabolic process"/>
    <property type="evidence" value="ECO:0000315"/>
    <property type="project" value="MGI"/>
</dbReference>
<dbReference type="GO" id="GO:1902224">
    <property type="term" value="P:ketone body metabolic process"/>
    <property type="evidence" value="ECO:0000314"/>
    <property type="project" value="MGI"/>
</dbReference>
<dbReference type="GO" id="GO:0042182">
    <property type="term" value="P:ketone catabolic process"/>
    <property type="evidence" value="ECO:0000315"/>
    <property type="project" value="MGI"/>
</dbReference>
<dbReference type="GO" id="GO:0035774">
    <property type="term" value="P:positive regulation of insulin secretion involved in cellular response to glucose stimulus"/>
    <property type="evidence" value="ECO:0007669"/>
    <property type="project" value="Ensembl"/>
</dbReference>
<dbReference type="GO" id="GO:0014823">
    <property type="term" value="P:response to activity"/>
    <property type="evidence" value="ECO:0007669"/>
    <property type="project" value="Ensembl"/>
</dbReference>
<dbReference type="GO" id="GO:0045471">
    <property type="term" value="P:response to ethanol"/>
    <property type="evidence" value="ECO:0007669"/>
    <property type="project" value="Ensembl"/>
</dbReference>
<dbReference type="GO" id="GO:0009725">
    <property type="term" value="P:response to hormone"/>
    <property type="evidence" value="ECO:0007669"/>
    <property type="project" value="Ensembl"/>
</dbReference>
<dbReference type="GO" id="GO:0007584">
    <property type="term" value="P:response to nutrient"/>
    <property type="evidence" value="ECO:0007669"/>
    <property type="project" value="Ensembl"/>
</dbReference>
<dbReference type="GO" id="GO:0042594">
    <property type="term" value="P:response to starvation"/>
    <property type="evidence" value="ECO:0007669"/>
    <property type="project" value="Ensembl"/>
</dbReference>
<dbReference type="GO" id="GO:0009410">
    <property type="term" value="P:response to xenobiotic stimulus"/>
    <property type="evidence" value="ECO:0007669"/>
    <property type="project" value="Ensembl"/>
</dbReference>
<dbReference type="FunFam" id="3.40.1080.10:FF:000001">
    <property type="entry name" value="Succinyl-coa:3-ketoacid-coenzyme a transferase subunit b"/>
    <property type="match status" value="1"/>
</dbReference>
<dbReference type="FunFam" id="3.40.1080.10:FF:000002">
    <property type="entry name" value="Succinyl-CoA:3-ketoacid-coenzyme A transferase, mitochondrial"/>
    <property type="match status" value="1"/>
</dbReference>
<dbReference type="Gene3D" id="3.40.1080.10">
    <property type="entry name" value="Glutaconate Coenzyme A-transferase"/>
    <property type="match status" value="2"/>
</dbReference>
<dbReference type="InterPro" id="IPR012792">
    <property type="entry name" value="3-oxoacid_CoA-transf_A"/>
</dbReference>
<dbReference type="InterPro" id="IPR012791">
    <property type="entry name" value="3-oxoacid_CoA-transf_B"/>
</dbReference>
<dbReference type="InterPro" id="IPR014388">
    <property type="entry name" value="3-oxoacid_CoA-transferase"/>
</dbReference>
<dbReference type="InterPro" id="IPR004165">
    <property type="entry name" value="CoA_trans_fam_I"/>
</dbReference>
<dbReference type="InterPro" id="IPR004164">
    <property type="entry name" value="CoA_transf_AS"/>
</dbReference>
<dbReference type="InterPro" id="IPR004163">
    <property type="entry name" value="CoA_transf_BS"/>
</dbReference>
<dbReference type="InterPro" id="IPR037171">
    <property type="entry name" value="NagB/RpiA_transferase-like"/>
</dbReference>
<dbReference type="NCBIfam" id="TIGR02429">
    <property type="entry name" value="pcaI_scoA_fam"/>
    <property type="match status" value="1"/>
</dbReference>
<dbReference type="NCBIfam" id="TIGR02428">
    <property type="entry name" value="pcaJ_scoB_fam"/>
    <property type="match status" value="1"/>
</dbReference>
<dbReference type="PANTHER" id="PTHR13707">
    <property type="entry name" value="KETOACID-COENZYME A TRANSFERASE"/>
    <property type="match status" value="1"/>
</dbReference>
<dbReference type="PANTHER" id="PTHR13707:SF30">
    <property type="entry name" value="SUCCINYL-COA:3-KETOACID COENZYME A TRANSFERASE 1, MITOCHONDRIAL"/>
    <property type="match status" value="1"/>
</dbReference>
<dbReference type="Pfam" id="PF01144">
    <property type="entry name" value="CoA_trans"/>
    <property type="match status" value="2"/>
</dbReference>
<dbReference type="PIRSF" id="PIRSF000858">
    <property type="entry name" value="SCOT-t"/>
    <property type="match status" value="1"/>
</dbReference>
<dbReference type="SMART" id="SM00882">
    <property type="entry name" value="CoA_trans"/>
    <property type="match status" value="2"/>
</dbReference>
<dbReference type="SUPFAM" id="SSF100950">
    <property type="entry name" value="NagB/RpiA/CoA transferase-like"/>
    <property type="match status" value="2"/>
</dbReference>
<dbReference type="PROSITE" id="PS01273">
    <property type="entry name" value="COA_TRANSF_1"/>
    <property type="match status" value="1"/>
</dbReference>
<dbReference type="PROSITE" id="PS01274">
    <property type="entry name" value="COA_TRANSF_2"/>
    <property type="match status" value="1"/>
</dbReference>
<accession>Q9D0K2</accession>
<accession>Q3TIW6</accession>
<accession>Q9CV92</accession>